<feature type="chain" id="PRO_0000328126" description="Translationally-controlled tumor protein homolog 2">
    <location>
        <begin position="1"/>
        <end position="194"/>
    </location>
</feature>
<feature type="domain" description="TCTP" evidence="2">
    <location>
        <begin position="1"/>
        <end position="194"/>
    </location>
</feature>
<keyword id="KW-0106">Calcium</keyword>
<keyword id="KW-0963">Cytoplasm</keyword>
<keyword id="KW-1185">Reference proteome</keyword>
<evidence type="ECO:0000250" key="1"/>
<evidence type="ECO:0000255" key="2">
    <source>
        <dbReference type="PROSITE-ProRule" id="PRU01133"/>
    </source>
</evidence>
<reference key="1">
    <citation type="journal article" date="2005" name="Nature">
        <title>The genome of the social amoeba Dictyostelium discoideum.</title>
        <authorList>
            <person name="Eichinger L."/>
            <person name="Pachebat J.A."/>
            <person name="Gloeckner G."/>
            <person name="Rajandream M.A."/>
            <person name="Sucgang R."/>
            <person name="Berriman M."/>
            <person name="Song J."/>
            <person name="Olsen R."/>
            <person name="Szafranski K."/>
            <person name="Xu Q."/>
            <person name="Tunggal B."/>
            <person name="Kummerfeld S."/>
            <person name="Madera M."/>
            <person name="Konfortov B.A."/>
            <person name="Rivero F."/>
            <person name="Bankier A.T."/>
            <person name="Lehmann R."/>
            <person name="Hamlin N."/>
            <person name="Davies R."/>
            <person name="Gaudet P."/>
            <person name="Fey P."/>
            <person name="Pilcher K."/>
            <person name="Chen G."/>
            <person name="Saunders D."/>
            <person name="Sodergren E.J."/>
            <person name="Davis P."/>
            <person name="Kerhornou A."/>
            <person name="Nie X."/>
            <person name="Hall N."/>
            <person name="Anjard C."/>
            <person name="Hemphill L."/>
            <person name="Bason N."/>
            <person name="Farbrother P."/>
            <person name="Desany B."/>
            <person name="Just E."/>
            <person name="Morio T."/>
            <person name="Rost R."/>
            <person name="Churcher C.M."/>
            <person name="Cooper J."/>
            <person name="Haydock S."/>
            <person name="van Driessche N."/>
            <person name="Cronin A."/>
            <person name="Goodhead I."/>
            <person name="Muzny D.M."/>
            <person name="Mourier T."/>
            <person name="Pain A."/>
            <person name="Lu M."/>
            <person name="Harper D."/>
            <person name="Lindsay R."/>
            <person name="Hauser H."/>
            <person name="James K.D."/>
            <person name="Quiles M."/>
            <person name="Madan Babu M."/>
            <person name="Saito T."/>
            <person name="Buchrieser C."/>
            <person name="Wardroper A."/>
            <person name="Felder M."/>
            <person name="Thangavelu M."/>
            <person name="Johnson D."/>
            <person name="Knights A."/>
            <person name="Loulseged H."/>
            <person name="Mungall K.L."/>
            <person name="Oliver K."/>
            <person name="Price C."/>
            <person name="Quail M.A."/>
            <person name="Urushihara H."/>
            <person name="Hernandez J."/>
            <person name="Rabbinowitsch E."/>
            <person name="Steffen D."/>
            <person name="Sanders M."/>
            <person name="Ma J."/>
            <person name="Kohara Y."/>
            <person name="Sharp S."/>
            <person name="Simmonds M.N."/>
            <person name="Spiegler S."/>
            <person name="Tivey A."/>
            <person name="Sugano S."/>
            <person name="White B."/>
            <person name="Walker D."/>
            <person name="Woodward J.R."/>
            <person name="Winckler T."/>
            <person name="Tanaka Y."/>
            <person name="Shaulsky G."/>
            <person name="Schleicher M."/>
            <person name="Weinstock G.M."/>
            <person name="Rosenthal A."/>
            <person name="Cox E.C."/>
            <person name="Chisholm R.L."/>
            <person name="Gibbs R.A."/>
            <person name="Loomis W.F."/>
            <person name="Platzer M."/>
            <person name="Kay R.R."/>
            <person name="Williams J.G."/>
            <person name="Dear P.H."/>
            <person name="Noegel A.A."/>
            <person name="Barrell B.G."/>
            <person name="Kuspa A."/>
        </authorList>
    </citation>
    <scope>NUCLEOTIDE SEQUENCE [LARGE SCALE GENOMIC DNA]</scope>
    <source>
        <strain>AX4</strain>
    </source>
</reference>
<name>TCTP2_DICDI</name>
<protein>
    <recommendedName>
        <fullName>Translationally-controlled tumor protein homolog 2</fullName>
        <shortName>TCTP 2</shortName>
    </recommendedName>
</protein>
<accession>Q54RX1</accession>
<organism>
    <name type="scientific">Dictyostelium discoideum</name>
    <name type="common">Social amoeba</name>
    <dbReference type="NCBI Taxonomy" id="44689"/>
    <lineage>
        <taxon>Eukaryota</taxon>
        <taxon>Amoebozoa</taxon>
        <taxon>Evosea</taxon>
        <taxon>Eumycetozoa</taxon>
        <taxon>Dictyostelia</taxon>
        <taxon>Dictyosteliales</taxon>
        <taxon>Dictyosteliaceae</taxon>
        <taxon>Dictyostelium</taxon>
    </lineage>
</organism>
<dbReference type="EMBL" id="AAFI02000047">
    <property type="protein sequence ID" value="EAL66010.1"/>
    <property type="molecule type" value="Genomic_DNA"/>
</dbReference>
<dbReference type="RefSeq" id="XP_639366.1">
    <property type="nucleotide sequence ID" value="XM_634274.1"/>
</dbReference>
<dbReference type="SMR" id="Q54RX1"/>
<dbReference type="FunCoup" id="Q54RX1">
    <property type="interactions" value="161"/>
</dbReference>
<dbReference type="STRING" id="44689.Q54RX1"/>
<dbReference type="PaxDb" id="44689-DDB0305047"/>
<dbReference type="EnsemblProtists" id="EAL66010">
    <property type="protein sequence ID" value="EAL66010"/>
    <property type="gene ID" value="DDB_G0282861"/>
</dbReference>
<dbReference type="GeneID" id="8623806"/>
<dbReference type="KEGG" id="ddi:DDB_G0282861"/>
<dbReference type="dictyBase" id="DDB_G0282861"/>
<dbReference type="VEuPathDB" id="AmoebaDB:DDB_G0282861"/>
<dbReference type="eggNOG" id="KOG1727">
    <property type="taxonomic scope" value="Eukaryota"/>
</dbReference>
<dbReference type="HOGENOM" id="CLU_1404821_0_0_1"/>
<dbReference type="InParanoid" id="Q54RX1"/>
<dbReference type="PhylomeDB" id="Q54RX1"/>
<dbReference type="PRO" id="PR:Q54RX1"/>
<dbReference type="Proteomes" id="UP000002195">
    <property type="component" value="Chromosome 3"/>
</dbReference>
<dbReference type="GO" id="GO:0005737">
    <property type="term" value="C:cytoplasm"/>
    <property type="evidence" value="ECO:0000318"/>
    <property type="project" value="GO_Central"/>
</dbReference>
<dbReference type="GO" id="GO:0005829">
    <property type="term" value="C:cytosol"/>
    <property type="evidence" value="ECO:0000314"/>
    <property type="project" value="dictyBase"/>
</dbReference>
<dbReference type="GO" id="GO:0005509">
    <property type="term" value="F:calcium ion binding"/>
    <property type="evidence" value="ECO:0000318"/>
    <property type="project" value="GO_Central"/>
</dbReference>
<dbReference type="GO" id="GO:0019954">
    <property type="term" value="P:asexual reproduction"/>
    <property type="evidence" value="ECO:0000315"/>
    <property type="project" value="dictyBase"/>
</dbReference>
<dbReference type="GO" id="GO:0006887">
    <property type="term" value="P:exocytosis"/>
    <property type="evidence" value="ECO:0000315"/>
    <property type="project" value="dictyBase"/>
</dbReference>
<dbReference type="GO" id="GO:0010507">
    <property type="term" value="P:negative regulation of autophagy"/>
    <property type="evidence" value="ECO:0000315"/>
    <property type="project" value="dictyBase"/>
</dbReference>
<dbReference type="GO" id="GO:0010629">
    <property type="term" value="P:negative regulation of gene expression"/>
    <property type="evidence" value="ECO:0000315"/>
    <property type="project" value="dictyBase"/>
</dbReference>
<dbReference type="GO" id="GO:0006907">
    <property type="term" value="P:pinocytosis"/>
    <property type="evidence" value="ECO:0000315"/>
    <property type="project" value="dictyBase"/>
</dbReference>
<dbReference type="GO" id="GO:0010628">
    <property type="term" value="P:positive regulation of gene expression"/>
    <property type="evidence" value="ECO:0000315"/>
    <property type="project" value="dictyBase"/>
</dbReference>
<dbReference type="GO" id="GO:0030587">
    <property type="term" value="P:sorocarp development"/>
    <property type="evidence" value="ECO:0000315"/>
    <property type="project" value="dictyBase"/>
</dbReference>
<dbReference type="GO" id="GO:0044671">
    <property type="term" value="P:sorocarp spore cell differentiation"/>
    <property type="evidence" value="ECO:0000315"/>
    <property type="project" value="dictyBase"/>
</dbReference>
<dbReference type="GO" id="GO:0031149">
    <property type="term" value="P:sorocarp stalk cell differentiation"/>
    <property type="evidence" value="ECO:0000315"/>
    <property type="project" value="dictyBase"/>
</dbReference>
<dbReference type="FunFam" id="2.170.150.10:FF:000002">
    <property type="entry name" value="Translationally-controlled tumor protein homolog"/>
    <property type="match status" value="1"/>
</dbReference>
<dbReference type="Gene3D" id="2.170.150.10">
    <property type="entry name" value="Metal Binding Protein, Guanine Nucleotide Exchange Factor, Chain A"/>
    <property type="match status" value="1"/>
</dbReference>
<dbReference type="InterPro" id="IPR011057">
    <property type="entry name" value="Mss4-like_sf"/>
</dbReference>
<dbReference type="InterPro" id="IPR011323">
    <property type="entry name" value="Mss4/transl-control_tumour"/>
</dbReference>
<dbReference type="InterPro" id="IPR034737">
    <property type="entry name" value="TCTP"/>
</dbReference>
<dbReference type="InterPro" id="IPR018105">
    <property type="entry name" value="Translational_control_tumour_p"/>
</dbReference>
<dbReference type="PANTHER" id="PTHR11991">
    <property type="entry name" value="TRANSLATIONALLY CONTROLLED TUMOR PROTEIN-RELATED"/>
    <property type="match status" value="1"/>
</dbReference>
<dbReference type="PANTHER" id="PTHR11991:SF0">
    <property type="entry name" value="TRANSLATIONALLY-CONTROLLED TUMOR PROTEIN"/>
    <property type="match status" value="1"/>
</dbReference>
<dbReference type="Pfam" id="PF00838">
    <property type="entry name" value="TCTP"/>
    <property type="match status" value="1"/>
</dbReference>
<dbReference type="SUPFAM" id="SSF51316">
    <property type="entry name" value="Mss4-like"/>
    <property type="match status" value="1"/>
</dbReference>
<dbReference type="PROSITE" id="PS51797">
    <property type="entry name" value="TCTP_3"/>
    <property type="match status" value="1"/>
</dbReference>
<comment type="function">
    <text evidence="1">Involved in calcium binding and microtubule stabilization.</text>
</comment>
<comment type="subcellular location">
    <subcellularLocation>
        <location evidence="1">Cytoplasm</location>
    </subcellularLocation>
</comment>
<comment type="similarity">
    <text evidence="2">Belongs to the TCTP family.</text>
</comment>
<sequence>MKLYKDLIGNSHDDLLTDRYEIKVGDVTFEVKTKMITKDLNVVVNNNSLGGSISTTVDNNNSITLSTNLEDEFENVEAAGTFQINNLVEQLRLVETSFDKKSYLAYMKLYIKDLINHIKQQPSNSDNEKIEHIQKGIQSFVKTMMDGENFKKYSFFTGSSMDANGLVALMYYKDDDPTTPTFVFIKYGLLQVDV</sequence>
<gene>
    <name type="ORF">DDB_G0282861</name>
</gene>
<proteinExistence type="inferred from homology"/>